<accession>C6KSX0</accession>
<feature type="signal peptide" evidence="1">
    <location>
        <begin position="1"/>
        <end position="25"/>
    </location>
</feature>
<feature type="chain" id="PRO_0000423557" description="Merozoite surface protein P12">
    <location>
        <begin position="26"/>
        <end position="322"/>
    </location>
</feature>
<feature type="chain" id="PRO_0000423558" description="Merozoite surface protein P12, processed form">
    <location>
        <begin position="26"/>
        <end status="unknown"/>
    </location>
</feature>
<feature type="propeptide" id="PRO_0000423559" description="Removed in mature form" evidence="1">
    <location>
        <begin position="323"/>
        <end position="347"/>
    </location>
</feature>
<feature type="domain" description="6-Cys 1">
    <location>
        <begin position="27"/>
        <end position="172"/>
    </location>
</feature>
<feature type="domain" description="6-Cys 2">
    <location>
        <begin position="175"/>
        <end position="305"/>
    </location>
</feature>
<feature type="lipid moiety-binding region" description="GPI-anchor amidated asparagine" evidence="1">
    <location>
        <position position="322"/>
    </location>
</feature>
<feature type="glycosylation site" description="N-linked (GlcNAc...) asparagine" evidence="1">
    <location>
        <position position="28"/>
    </location>
</feature>
<feature type="glycosylation site" description="N-linked (GlcNAc...) asparagine" evidence="1">
    <location>
        <position position="147"/>
    </location>
</feature>
<feature type="glycosylation site" description="N-linked (GlcNAc...) asparagine" evidence="1">
    <location>
        <position position="200"/>
    </location>
</feature>
<feature type="glycosylation site" description="N-linked (GlcNAc...) asparagine" evidence="1">
    <location>
        <position position="228"/>
    </location>
</feature>
<feature type="glycosylation site" description="N-linked (GlcNAc...) asparagine" evidence="1">
    <location>
        <position position="242"/>
    </location>
</feature>
<feature type="glycosylation site" description="N-linked (GlcNAc...) asparagine" evidence="1">
    <location>
        <position position="265"/>
    </location>
</feature>
<feature type="glycosylation site" description="N-linked (GlcNAc...) asparagine" evidence="1">
    <location>
        <position position="322"/>
    </location>
</feature>
<feature type="disulfide bond" evidence="4">
    <location>
        <begin position="31"/>
        <end position="53"/>
    </location>
</feature>
<feature type="disulfide bond" evidence="4">
    <location>
        <begin position="67"/>
        <end position="138"/>
    </location>
</feature>
<feature type="disulfide bond" evidence="4">
    <location>
        <begin position="81"/>
        <end position="136"/>
    </location>
</feature>
<feature type="disulfide bond" evidence="4">
    <location>
        <begin position="179"/>
        <end position="211"/>
    </location>
</feature>
<feature type="disulfide bond" evidence="4">
    <location>
        <begin position="225"/>
        <end position="286"/>
    </location>
</feature>
<feature type="disulfide bond" evidence="4">
    <location>
        <begin position="236"/>
        <end position="284"/>
    </location>
</feature>
<feature type="strand" evidence="9">
    <location>
        <begin position="30"/>
        <end position="32"/>
    </location>
</feature>
<feature type="turn" evidence="9">
    <location>
        <begin position="33"/>
        <end position="36"/>
    </location>
</feature>
<feature type="strand" evidence="9">
    <location>
        <begin position="49"/>
        <end position="55"/>
    </location>
</feature>
<feature type="strand" evidence="9">
    <location>
        <begin position="62"/>
        <end position="66"/>
    </location>
</feature>
<feature type="strand" evidence="7">
    <location>
        <begin position="70"/>
        <end position="72"/>
    </location>
</feature>
<feature type="strand" evidence="9">
    <location>
        <begin position="75"/>
        <end position="78"/>
    </location>
</feature>
<feature type="turn" evidence="9">
    <location>
        <begin position="79"/>
        <end position="82"/>
    </location>
</feature>
<feature type="strand" evidence="9">
    <location>
        <begin position="83"/>
        <end position="88"/>
    </location>
</feature>
<feature type="strand" evidence="9">
    <location>
        <begin position="94"/>
        <end position="96"/>
    </location>
</feature>
<feature type="helix" evidence="9">
    <location>
        <begin position="97"/>
        <end position="100"/>
    </location>
</feature>
<feature type="strand" evidence="9">
    <location>
        <begin position="107"/>
        <end position="110"/>
    </location>
</feature>
<feature type="strand" evidence="9">
    <location>
        <begin position="119"/>
        <end position="123"/>
    </location>
</feature>
<feature type="strand" evidence="9">
    <location>
        <begin position="132"/>
        <end position="146"/>
    </location>
</feature>
<feature type="strand" evidence="9">
    <location>
        <begin position="155"/>
        <end position="169"/>
    </location>
</feature>
<feature type="strand" evidence="9">
    <location>
        <begin position="176"/>
        <end position="180"/>
    </location>
</feature>
<feature type="strand" evidence="9">
    <location>
        <begin position="187"/>
        <end position="192"/>
    </location>
</feature>
<feature type="helix" evidence="9">
    <location>
        <begin position="195"/>
        <end position="198"/>
    </location>
</feature>
<feature type="turn" evidence="8">
    <location>
        <begin position="200"/>
        <end position="202"/>
    </location>
</feature>
<feature type="strand" evidence="9">
    <location>
        <begin position="209"/>
        <end position="215"/>
    </location>
</feature>
<feature type="strand" evidence="9">
    <location>
        <begin position="220"/>
        <end position="224"/>
    </location>
</feature>
<feature type="strand" evidence="9">
    <location>
        <begin position="230"/>
        <end position="233"/>
    </location>
</feature>
<feature type="turn" evidence="8">
    <location>
        <begin position="234"/>
        <end position="238"/>
    </location>
</feature>
<feature type="strand" evidence="9">
    <location>
        <begin position="239"/>
        <end position="241"/>
    </location>
</feature>
<feature type="strand" evidence="9">
    <location>
        <begin position="247"/>
        <end position="249"/>
    </location>
</feature>
<feature type="helix" evidence="9">
    <location>
        <begin position="250"/>
        <end position="252"/>
    </location>
</feature>
<feature type="strand" evidence="9">
    <location>
        <begin position="257"/>
        <end position="262"/>
    </location>
</feature>
<feature type="turn" evidence="9">
    <location>
        <begin position="263"/>
        <end position="266"/>
    </location>
</feature>
<feature type="strand" evidence="9">
    <location>
        <begin position="267"/>
        <end position="271"/>
    </location>
</feature>
<feature type="strand" evidence="7">
    <location>
        <begin position="274"/>
        <end position="276"/>
    </location>
</feature>
<feature type="strand" evidence="9">
    <location>
        <begin position="280"/>
        <end position="287"/>
    </location>
</feature>
<feature type="strand" evidence="9">
    <location>
        <begin position="294"/>
        <end position="300"/>
    </location>
</feature>
<feature type="strand" evidence="7">
    <location>
        <begin position="302"/>
        <end position="304"/>
    </location>
</feature>
<protein>
    <recommendedName>
        <fullName>Merozoite surface protein P12</fullName>
    </recommendedName>
    <component>
        <recommendedName>
            <fullName>Merozoite surface protein P12, processed form</fullName>
        </recommendedName>
    </component>
</protein>
<evidence type="ECO:0000255" key="1"/>
<evidence type="ECO:0000269" key="2">
    <source>
    </source>
</evidence>
<evidence type="ECO:0000269" key="3">
    <source>
    </source>
</evidence>
<evidence type="ECO:0000269" key="4">
    <source>
    </source>
</evidence>
<evidence type="ECO:0000305" key="5"/>
<evidence type="ECO:0000305" key="6">
    <source>
    </source>
</evidence>
<evidence type="ECO:0007829" key="7">
    <source>
        <dbReference type="PDB" id="2YMO"/>
    </source>
</evidence>
<evidence type="ECO:0007829" key="8">
    <source>
        <dbReference type="PDB" id="7S7Q"/>
    </source>
</evidence>
<evidence type="ECO:0007829" key="9">
    <source>
        <dbReference type="PDB" id="7S7R"/>
    </source>
</evidence>
<name>PF12_PLAF7</name>
<keyword id="KW-0002">3D-structure</keyword>
<keyword id="KW-1003">Cell membrane</keyword>
<keyword id="KW-1015">Disulfide bond</keyword>
<keyword id="KW-0325">Glycoprotein</keyword>
<keyword id="KW-0336">GPI-anchor</keyword>
<keyword id="KW-0449">Lipoprotein</keyword>
<keyword id="KW-0461">Malaria</keyword>
<keyword id="KW-0472">Membrane</keyword>
<keyword id="KW-1185">Reference proteome</keyword>
<keyword id="KW-0677">Repeat</keyword>
<keyword id="KW-0732">Signal</keyword>
<proteinExistence type="evidence at protein level"/>
<organism>
    <name type="scientific">Plasmodium falciparum (isolate 3D7)</name>
    <dbReference type="NCBI Taxonomy" id="36329"/>
    <lineage>
        <taxon>Eukaryota</taxon>
        <taxon>Sar</taxon>
        <taxon>Alveolata</taxon>
        <taxon>Apicomplexa</taxon>
        <taxon>Aconoidasida</taxon>
        <taxon>Haemosporida</taxon>
        <taxon>Plasmodiidae</taxon>
        <taxon>Plasmodium</taxon>
        <taxon>Plasmodium (Laverania)</taxon>
    </lineage>
</organism>
<gene>
    <name type="primary">PF12</name>
    <name type="ORF">PFF0615c</name>
</gene>
<sequence length="347" mass="39434">MIKLSKKYCLGISFVLYILLSVCEGHKNLTCDFNDVYKLEFHPNQQTSVTKLCNLTPNVLEKVTIKCGSDKLNYNLYPPTCFEEVYASRNMMHLKKIKEFVIGSSMFMRRSLTPNKINEVSFRIPPNMMPEKPIYCFCENKKTITINGSNGNPSSKKDIINRGIVEIIIPSLNEKVKGCDFTTSESTIFSKGYSINEISNKSSNNQQDIVCTVKAHANDLIGFKCPSNYSVEPHDCFVSAFNLSGKNENLENKLKLTNIIMDHYNNTFYSRLPSLISDNWKFFCVCSKDNEKKLVFTVEASISSSNTKLASRDNTYQDYISNSSFLTLSSYCAFITFIITSFLSFIL</sequence>
<dbReference type="EMBL" id="AL844505">
    <property type="protein sequence ID" value="CAG25366.1"/>
    <property type="molecule type" value="Genomic_DNA"/>
</dbReference>
<dbReference type="RefSeq" id="XP_966114.1">
    <property type="nucleotide sequence ID" value="XM_961021.1"/>
</dbReference>
<dbReference type="PDB" id="2YMO">
    <property type="method" value="X-ray"/>
    <property type="resolution" value="1.90 A"/>
    <property type="chains" value="A=28-304"/>
</dbReference>
<dbReference type="PDB" id="7S7Q">
    <property type="method" value="X-ray"/>
    <property type="resolution" value="2.85 A"/>
    <property type="chains" value="B=28-304"/>
</dbReference>
<dbReference type="PDB" id="7S7R">
    <property type="method" value="X-ray"/>
    <property type="resolution" value="1.77 A"/>
    <property type="chains" value="A=28-304"/>
</dbReference>
<dbReference type="PDBsum" id="2YMO"/>
<dbReference type="PDBsum" id="7S7Q"/>
<dbReference type="PDBsum" id="7S7R"/>
<dbReference type="BMRB" id="C6KSX0"/>
<dbReference type="SMR" id="C6KSX0"/>
<dbReference type="FunCoup" id="C6KSX0">
    <property type="interactions" value="484"/>
</dbReference>
<dbReference type="STRING" id="36329.C6KSX0"/>
<dbReference type="GlyCosmos" id="C6KSX0">
    <property type="glycosylation" value="7 sites, No reported glycans"/>
</dbReference>
<dbReference type="SwissPalm" id="C6KSX0"/>
<dbReference type="PaxDb" id="5833-PFF0615c"/>
<dbReference type="EnsemblProtists" id="CAG25366">
    <property type="protein sequence ID" value="CAG25366"/>
    <property type="gene ID" value="PF3D7_0612700"/>
</dbReference>
<dbReference type="KEGG" id="pfa:PF3D7_0612700"/>
<dbReference type="VEuPathDB" id="PlasmoDB:PF3D7_0612700"/>
<dbReference type="HOGENOM" id="CLU_766140_0_0_1"/>
<dbReference type="InParanoid" id="C6KSX0"/>
<dbReference type="OMA" id="IEPEECF"/>
<dbReference type="OrthoDB" id="384332at2759"/>
<dbReference type="PhylomeDB" id="C6KSX0"/>
<dbReference type="EvolutionaryTrace" id="C6KSX0"/>
<dbReference type="Proteomes" id="UP000001450">
    <property type="component" value="Chromosome 6"/>
</dbReference>
<dbReference type="GO" id="GO:0045177">
    <property type="term" value="C:apical part of cell"/>
    <property type="evidence" value="ECO:0000314"/>
    <property type="project" value="GeneDB"/>
</dbReference>
<dbReference type="GO" id="GO:0009986">
    <property type="term" value="C:cell surface"/>
    <property type="evidence" value="ECO:0000314"/>
    <property type="project" value="GeneDB"/>
</dbReference>
<dbReference type="GO" id="GO:0005886">
    <property type="term" value="C:plasma membrane"/>
    <property type="evidence" value="ECO:0007669"/>
    <property type="project" value="UniProtKB-SubCell"/>
</dbReference>
<dbReference type="GO" id="GO:0098552">
    <property type="term" value="C:side of membrane"/>
    <property type="evidence" value="ECO:0007669"/>
    <property type="project" value="UniProtKB-KW"/>
</dbReference>
<dbReference type="GO" id="GO:0020004">
    <property type="term" value="C:symbiont-containing vacuolar space"/>
    <property type="evidence" value="ECO:0000314"/>
    <property type="project" value="GeneDB"/>
</dbReference>
<dbReference type="GO" id="GO:0044409">
    <property type="term" value="P:symbiont entry into host"/>
    <property type="evidence" value="ECO:0000314"/>
    <property type="project" value="GeneDB"/>
</dbReference>
<dbReference type="DisProt" id="DP01574"/>
<dbReference type="FunFam" id="2.60.40.2860:FF:000017">
    <property type="entry name" value="Membrane protein PF12"/>
    <property type="match status" value="1"/>
</dbReference>
<dbReference type="FunFam" id="2.60.40.2860:FF:000018">
    <property type="entry name" value="Membrane protein pf12"/>
    <property type="match status" value="1"/>
</dbReference>
<dbReference type="Gene3D" id="2.60.40.2860">
    <property type="match status" value="2"/>
</dbReference>
<dbReference type="InterPro" id="IPR010884">
    <property type="entry name" value="6_CYS_dom"/>
</dbReference>
<dbReference type="InterPro" id="IPR038160">
    <property type="entry name" value="6_CYS_dom_sf"/>
</dbReference>
<dbReference type="InterPro" id="IPR051444">
    <property type="entry name" value="Parasite_Repro/Invasion_Surf"/>
</dbReference>
<dbReference type="PANTHER" id="PTHR38796">
    <property type="match status" value="1"/>
</dbReference>
<dbReference type="PANTHER" id="PTHR38796:SF1">
    <property type="entry name" value="ANCHORED PROTEIN, PUTATIVE (AFU_ORTHOLOGUE AFUA_4G09600)-RELATED"/>
    <property type="match status" value="1"/>
</dbReference>
<dbReference type="Pfam" id="PF07422">
    <property type="entry name" value="s48_45"/>
    <property type="match status" value="2"/>
</dbReference>
<dbReference type="SMART" id="SM00970">
    <property type="entry name" value="s48_45"/>
    <property type="match status" value="2"/>
</dbReference>
<dbReference type="PROSITE" id="PS51701">
    <property type="entry name" value="6_CYS"/>
    <property type="match status" value="2"/>
</dbReference>
<comment type="subunit">
    <text>Heterodimer; heterodimerizes with PF41. May form an antiparallel heterodimer with PF41.</text>
</comment>
<comment type="subcellular location">
    <molecule>Merozoite surface protein P12</molecule>
    <subcellularLocation>
        <location>Cell surface</location>
    </subcellularLocation>
    <subcellularLocation>
        <location evidence="5">Cell membrane</location>
        <topology evidence="5">Lipid-anchor</topology>
        <topology evidence="5">GPI-anchor</topology>
    </subcellularLocation>
    <text evidence="3">Present on the surface of merozoite.</text>
</comment>
<comment type="subcellular location">
    <molecule>Merozoite surface protein P12, processed form</molecule>
    <subcellularLocation>
        <location>Cell surface</location>
    </subcellularLocation>
    <subcellularLocation>
        <location>Cell membrane</location>
    </subcellularLocation>
    <text evidence="3">Shed from the merozoite surface.</text>
</comment>
<comment type="developmental stage">
    <text evidence="2 3">Specifically present in asexual blood stage parasites. First detected in the trophozoite stage, 30-40 hours post-invasion (HPI) and the proteins reaches peak expression in schizont stage, 40-48 HPI.</text>
</comment>
<comment type="PTM">
    <text evidence="3">Processed into a soluble form.</text>
</comment>
<comment type="disruption phenotype">
    <text evidence="3">No visible phenotype. Parasites grow at normal rates in vitro.</text>
</comment>
<comment type="miscellaneous">
    <text evidence="6">Does not have erythrocyte-receptor-binding ability.</text>
</comment>
<reference key="1">
    <citation type="journal article" date="2002" name="Nature">
        <title>Genome sequence of the human malaria parasite Plasmodium falciparum.</title>
        <authorList>
            <person name="Gardner M.J."/>
            <person name="Hall N."/>
            <person name="Fung E."/>
            <person name="White O."/>
            <person name="Berriman M."/>
            <person name="Hyman R.W."/>
            <person name="Carlton J.M."/>
            <person name="Pain A."/>
            <person name="Nelson K.E."/>
            <person name="Bowman S."/>
            <person name="Paulsen I.T."/>
            <person name="James K.D."/>
            <person name="Eisen J.A."/>
            <person name="Rutherford K.M."/>
            <person name="Salzberg S.L."/>
            <person name="Craig A."/>
            <person name="Kyes S."/>
            <person name="Chan M.-S."/>
            <person name="Nene V."/>
            <person name="Shallom S.J."/>
            <person name="Suh B."/>
            <person name="Peterson J."/>
            <person name="Angiuoli S."/>
            <person name="Pertea M."/>
            <person name="Allen J."/>
            <person name="Selengut J."/>
            <person name="Haft D."/>
            <person name="Mather M.W."/>
            <person name="Vaidya A.B."/>
            <person name="Martin D.M.A."/>
            <person name="Fairlamb A.H."/>
            <person name="Fraunholz M.J."/>
            <person name="Roos D.S."/>
            <person name="Ralph S.A."/>
            <person name="McFadden G.I."/>
            <person name="Cummings L.M."/>
            <person name="Subramanian G.M."/>
            <person name="Mungall C."/>
            <person name="Venter J.C."/>
            <person name="Carucci D.J."/>
            <person name="Hoffman S.L."/>
            <person name="Newbold C."/>
            <person name="Davis R.W."/>
            <person name="Fraser C.M."/>
            <person name="Barrell B.G."/>
        </authorList>
    </citation>
    <scope>NUCLEOTIDE SEQUENCE [LARGE SCALE GENOMIC DNA]</scope>
    <source>
        <strain>3D7</strain>
    </source>
</reference>
<reference key="2">
    <citation type="journal article" date="2002" name="Nature">
        <title>Sequence of Plasmodium falciparum chromosomes 1, 3-9 and 13.</title>
        <authorList>
            <person name="Hall N."/>
            <person name="Pain A."/>
            <person name="Berriman M."/>
            <person name="Churcher C.M."/>
            <person name="Harris B."/>
            <person name="Harris D."/>
            <person name="Mungall K.L."/>
            <person name="Bowman S."/>
            <person name="Atkin R."/>
            <person name="Baker S."/>
            <person name="Barron A."/>
            <person name="Brooks K."/>
            <person name="Buckee C.O."/>
            <person name="Burrows C."/>
            <person name="Cherevach I."/>
            <person name="Chillingworth C."/>
            <person name="Chillingworth T."/>
            <person name="Christodoulou Z."/>
            <person name="Clark L."/>
            <person name="Clark R."/>
            <person name="Corton C."/>
            <person name="Cronin A."/>
            <person name="Davies R.M."/>
            <person name="Davis P."/>
            <person name="Dear P."/>
            <person name="Dearden F."/>
            <person name="Doggett J."/>
            <person name="Feltwell T."/>
            <person name="Goble A."/>
            <person name="Goodhead I."/>
            <person name="Gwilliam R."/>
            <person name="Hamlin N."/>
            <person name="Hance Z."/>
            <person name="Harper D."/>
            <person name="Hauser H."/>
            <person name="Hornsby T."/>
            <person name="Holroyd S."/>
            <person name="Horrocks P."/>
            <person name="Humphray S."/>
            <person name="Jagels K."/>
            <person name="James K.D."/>
            <person name="Johnson D."/>
            <person name="Kerhornou A."/>
            <person name="Knights A."/>
            <person name="Konfortov B."/>
            <person name="Kyes S."/>
            <person name="Larke N."/>
            <person name="Lawson D."/>
            <person name="Lennard N."/>
            <person name="Line A."/>
            <person name="Maddison M."/>
            <person name="Mclean J."/>
            <person name="Mooney P."/>
            <person name="Moule S."/>
            <person name="Murphy L."/>
            <person name="Oliver K."/>
            <person name="Ormond D."/>
            <person name="Price C."/>
            <person name="Quail M.A."/>
            <person name="Rabbinowitsch E."/>
            <person name="Rajandream M.A."/>
            <person name="Rutter S."/>
            <person name="Rutherford K.M."/>
            <person name="Sanders M."/>
            <person name="Simmonds M."/>
            <person name="Seeger K."/>
            <person name="Sharp S."/>
            <person name="Smith R."/>
            <person name="Squares R."/>
            <person name="Squares S."/>
            <person name="Stevens K."/>
            <person name="Taylor K."/>
            <person name="Tivey A."/>
            <person name="Unwin L."/>
            <person name="Whitehead S."/>
            <person name="Woodward J.R."/>
            <person name="Sulston J.E."/>
            <person name="Craig A."/>
            <person name="Newbold C."/>
            <person name="Barrell B.G."/>
        </authorList>
    </citation>
    <scope>NUCLEOTIDE SEQUENCE [LARGE SCALE GENOMIC DNA]</scope>
    <source>
        <strain>3D7</strain>
    </source>
</reference>
<reference key="3">
    <citation type="journal article" date="1995" name="Mol. Biochem. Parasitol.">
        <title>Predicted disulfide-bonded structures for three uniquely related proteins of Plasmodium falciparum, Pfs230, Pfs48/45 and Pf12.</title>
        <authorList>
            <person name="Carter R."/>
            <person name="Coulson A."/>
            <person name="Bhatti S."/>
            <person name="Taylor B.J."/>
            <person name="Elliott J.F."/>
        </authorList>
    </citation>
    <scope>IDENTIFICATION</scope>
</reference>
<reference key="4">
    <citation type="journal article" date="2005" name="J. Biol. Chem.">
        <title>Distinct protein classes including novel merozoite surface antigens in Raft-like membranes of Plasmodium falciparum.</title>
        <authorList>
            <person name="Sanders P.R."/>
            <person name="Gilson P.R."/>
            <person name="Cantin G.T."/>
            <person name="Greenbaum D.C."/>
            <person name="Nebl T."/>
            <person name="Carucci D.J."/>
            <person name="McConville M.J."/>
            <person name="Schofield L."/>
            <person name="Hodder A.N."/>
            <person name="Yates J.R. III"/>
            <person name="Crabb B.S."/>
        </authorList>
    </citation>
    <scope>SUBCELLULAR LOCATION</scope>
    <scope>DEVELOPMENTAL STAGE</scope>
</reference>
<reference key="5">
    <citation type="journal article" date="2006" name="Mol. Cell. Proteomics">
        <title>Identification and stoichiometry of glycosylphosphatidylinositol-anchored membrane proteins of the human malaria parasite Plasmodium falciparum.</title>
        <authorList>
            <person name="Gilson P.R."/>
            <person name="Nebl T."/>
            <person name="Vukcevic D."/>
            <person name="Moritz R.L."/>
            <person name="Sargeant T."/>
            <person name="Speed T.P."/>
            <person name="Schofield L."/>
            <person name="Crabb B.S."/>
        </authorList>
    </citation>
    <scope>GPI-ANCHOR</scope>
</reference>
<reference key="6">
    <citation type="journal article" date="2012" name="PLoS ONE">
        <title>Biochemical and functional analysis of two Plasmodium falciparum blood-stage 6-cys proteins: P12 and P41.</title>
        <authorList>
            <person name="Taechalertpaisarn T."/>
            <person name="Crosnier C."/>
            <person name="Bartholdson S.J."/>
            <person name="Hodder A.N."/>
            <person name="Thompson J."/>
            <person name="Bustamante L.Y."/>
            <person name="Wilson D.W."/>
            <person name="Sanders P.R."/>
            <person name="Wright G.J."/>
            <person name="Rayner J.C."/>
            <person name="Cowman A.F."/>
            <person name="Gilson P.R."/>
            <person name="Crabb B.S."/>
        </authorList>
    </citation>
    <scope>SUBCELLULAR LOCATION</scope>
    <scope>CLEAVAGE</scope>
    <scope>DEVELOPMENTAL STAGE</scope>
    <scope>DISRUPTION PHENOTYPE</scope>
    <scope>INTERACTION WITH PF41</scope>
</reference>
<reference key="7">
    <citation type="journal article" date="2013" name="J. Biol. Chem.">
        <title>Structural and biochemical characterization of Plasmodium falciparum 12 (Pf12) reveals a unique interdomain organization and the potential for an antiparallel arrangement with Pf41.</title>
        <authorList>
            <person name="Tonkin M.L."/>
            <person name="Arredondo S.A."/>
            <person name="Loveless B.C."/>
            <person name="Serpa J.J."/>
            <person name="Makepeace K.A."/>
            <person name="Sundar N."/>
            <person name="Petrotchenko E.V."/>
            <person name="Miller L.H."/>
            <person name="Grigg M.E."/>
            <person name="Boulanger M.J."/>
        </authorList>
    </citation>
    <scope>X-RAY CRYSTALLOGRAPHY (1.90 ANGSTROMS) OF 28-304</scope>
    <scope>DISULFIDE BOND</scope>
    <scope>SUBCELLULAR LOCATION</scope>
    <scope>INTERACTION WITH PF41</scope>
</reference>